<sequence>MMRGGMGNMQKMLKQMQKMQKEMQKAQEELAEKTVEGTAGGGMVTVVANGHKQILEVKIKEEVVDPDDIEMLQDLILAATNDALKKADELANEMMGQFTKGLNIPGLF</sequence>
<protein>
    <recommendedName>
        <fullName evidence="1">Nucleoid-associated protein GK0018</fullName>
    </recommendedName>
</protein>
<comment type="function">
    <text evidence="1">Binds to DNA and alters its conformation. May be involved in regulation of gene expression, nucleoid organization and DNA protection.</text>
</comment>
<comment type="subunit">
    <text evidence="1">Homodimer.</text>
</comment>
<comment type="subcellular location">
    <subcellularLocation>
        <location evidence="1">Cytoplasm</location>
        <location evidence="1">Nucleoid</location>
    </subcellularLocation>
</comment>
<comment type="similarity">
    <text evidence="1">Belongs to the YbaB/EbfC family.</text>
</comment>
<keyword id="KW-0963">Cytoplasm</keyword>
<keyword id="KW-0238">DNA-binding</keyword>
<keyword id="KW-1185">Reference proteome</keyword>
<proteinExistence type="inferred from homology"/>
<gene>
    <name type="ordered locus">GK0018</name>
</gene>
<reference key="1">
    <citation type="journal article" date="2004" name="Nucleic Acids Res.">
        <title>Thermoadaptation trait revealed by the genome sequence of thermophilic Geobacillus kaustophilus.</title>
        <authorList>
            <person name="Takami H."/>
            <person name="Takaki Y."/>
            <person name="Chee G.-J."/>
            <person name="Nishi S."/>
            <person name="Shimamura S."/>
            <person name="Suzuki H."/>
            <person name="Matsui S."/>
            <person name="Uchiyama I."/>
        </authorList>
    </citation>
    <scope>NUCLEOTIDE SEQUENCE [LARGE SCALE GENOMIC DNA]</scope>
    <source>
        <strain>HTA426</strain>
    </source>
</reference>
<evidence type="ECO:0000255" key="1">
    <source>
        <dbReference type="HAMAP-Rule" id="MF_00274"/>
    </source>
</evidence>
<evidence type="ECO:0000256" key="2">
    <source>
        <dbReference type="SAM" id="MobiDB-lite"/>
    </source>
</evidence>
<name>Y018_GEOKA</name>
<accession>Q5L3X5</accession>
<dbReference type="EMBL" id="BA000043">
    <property type="protein sequence ID" value="BAD74303.1"/>
    <property type="molecule type" value="Genomic_DNA"/>
</dbReference>
<dbReference type="SMR" id="Q5L3X5"/>
<dbReference type="STRING" id="235909.GK0018"/>
<dbReference type="KEGG" id="gka:GK0018"/>
<dbReference type="eggNOG" id="COG0718">
    <property type="taxonomic scope" value="Bacteria"/>
</dbReference>
<dbReference type="HOGENOM" id="CLU_140930_1_0_9"/>
<dbReference type="Proteomes" id="UP000001172">
    <property type="component" value="Chromosome"/>
</dbReference>
<dbReference type="GO" id="GO:0043590">
    <property type="term" value="C:bacterial nucleoid"/>
    <property type="evidence" value="ECO:0007669"/>
    <property type="project" value="UniProtKB-UniRule"/>
</dbReference>
<dbReference type="GO" id="GO:0005829">
    <property type="term" value="C:cytosol"/>
    <property type="evidence" value="ECO:0007669"/>
    <property type="project" value="TreeGrafter"/>
</dbReference>
<dbReference type="GO" id="GO:0003677">
    <property type="term" value="F:DNA binding"/>
    <property type="evidence" value="ECO:0007669"/>
    <property type="project" value="UniProtKB-UniRule"/>
</dbReference>
<dbReference type="FunFam" id="3.30.1310.10:FF:000002">
    <property type="entry name" value="Nucleoid-associated protein IKC_06587"/>
    <property type="match status" value="1"/>
</dbReference>
<dbReference type="Gene3D" id="3.30.1310.10">
    <property type="entry name" value="Nucleoid-associated protein YbaB-like domain"/>
    <property type="match status" value="1"/>
</dbReference>
<dbReference type="HAMAP" id="MF_00274">
    <property type="entry name" value="DNA_YbaB_EbfC"/>
    <property type="match status" value="1"/>
</dbReference>
<dbReference type="InterPro" id="IPR036894">
    <property type="entry name" value="YbaB-like_sf"/>
</dbReference>
<dbReference type="InterPro" id="IPR004401">
    <property type="entry name" value="YbaB/EbfC"/>
</dbReference>
<dbReference type="NCBIfam" id="TIGR00103">
    <property type="entry name" value="DNA_YbaB_EbfC"/>
    <property type="match status" value="1"/>
</dbReference>
<dbReference type="PANTHER" id="PTHR33449">
    <property type="entry name" value="NUCLEOID-ASSOCIATED PROTEIN YBAB"/>
    <property type="match status" value="1"/>
</dbReference>
<dbReference type="PANTHER" id="PTHR33449:SF1">
    <property type="entry name" value="NUCLEOID-ASSOCIATED PROTEIN YBAB"/>
    <property type="match status" value="1"/>
</dbReference>
<dbReference type="Pfam" id="PF02575">
    <property type="entry name" value="YbaB_DNA_bd"/>
    <property type="match status" value="1"/>
</dbReference>
<dbReference type="PIRSF" id="PIRSF004555">
    <property type="entry name" value="UCP004555"/>
    <property type="match status" value="1"/>
</dbReference>
<dbReference type="SUPFAM" id="SSF82607">
    <property type="entry name" value="YbaB-like"/>
    <property type="match status" value="1"/>
</dbReference>
<feature type="chain" id="PRO_1000003742" description="Nucleoid-associated protein GK0018">
    <location>
        <begin position="1"/>
        <end position="108"/>
    </location>
</feature>
<feature type="region of interest" description="Disordered" evidence="2">
    <location>
        <begin position="1"/>
        <end position="32"/>
    </location>
</feature>
<feature type="compositionally biased region" description="Low complexity" evidence="2">
    <location>
        <begin position="9"/>
        <end position="18"/>
    </location>
</feature>
<feature type="compositionally biased region" description="Basic and acidic residues" evidence="2">
    <location>
        <begin position="19"/>
        <end position="32"/>
    </location>
</feature>
<organism>
    <name type="scientific">Geobacillus kaustophilus (strain HTA426)</name>
    <dbReference type="NCBI Taxonomy" id="235909"/>
    <lineage>
        <taxon>Bacteria</taxon>
        <taxon>Bacillati</taxon>
        <taxon>Bacillota</taxon>
        <taxon>Bacilli</taxon>
        <taxon>Bacillales</taxon>
        <taxon>Anoxybacillaceae</taxon>
        <taxon>Geobacillus</taxon>
        <taxon>Geobacillus thermoleovorans group</taxon>
    </lineage>
</organism>